<organism>
    <name type="scientific">Symbiobacterium thermophilum (strain DSM 24528 / JCM 14929 / IAM 14863 / T)</name>
    <dbReference type="NCBI Taxonomy" id="292459"/>
    <lineage>
        <taxon>Bacteria</taxon>
        <taxon>Bacillati</taxon>
        <taxon>Bacillota</taxon>
        <taxon>Clostridia</taxon>
        <taxon>Eubacteriales</taxon>
        <taxon>Symbiobacteriaceae</taxon>
        <taxon>Symbiobacterium</taxon>
    </lineage>
</organism>
<accession>Q67PA6</accession>
<reference key="1">
    <citation type="journal article" date="2004" name="Nucleic Acids Res.">
        <title>Genome sequence of Symbiobacterium thermophilum, an uncultivable bacterium that depends on microbial commensalism.</title>
        <authorList>
            <person name="Ueda K."/>
            <person name="Yamashita A."/>
            <person name="Ishikawa J."/>
            <person name="Shimada M."/>
            <person name="Watsuji T."/>
            <person name="Morimura K."/>
            <person name="Ikeda H."/>
            <person name="Hattori M."/>
            <person name="Beppu T."/>
        </authorList>
    </citation>
    <scope>NUCLEOTIDE SEQUENCE [LARGE SCALE GENOMIC DNA]</scope>
    <source>
        <strain>DSM 24528 / JCM 14929 / IAM 14863 / T</strain>
    </source>
</reference>
<protein>
    <recommendedName>
        <fullName evidence="1">Proline--tRNA ligase</fullName>
        <ecNumber evidence="1">6.1.1.15</ecNumber>
    </recommendedName>
    <alternativeName>
        <fullName evidence="1">Prolyl-tRNA synthetase</fullName>
        <shortName evidence="1">ProRS</shortName>
    </alternativeName>
</protein>
<proteinExistence type="inferred from homology"/>
<sequence length="488" mass="56295">MKEEKSFVKEITPQSEDFSRWYIDVIRKADLMDYTPVRGCIVFKPDGYELWERIQAGLDKRFKETGHRNAYFPMLIPESFFQKEKEHVEGFNPELPWVTEAGGEKLEERLALRPTSETIIGHMYAQWIQSYRDLPVLINQWANVFRWEKRTLPFLRTSEFLWQEGHTAHATEEEAREETMRMLEVYRDFVETEMAIPLYVGQKTPSEKFAGAVDTYSIEAMMKDGKALQAGTSHYLGQNFAKGFEIKFLDRDNQLKYVHTTSWGVSTRLIGALIMVHGDDRGLALPPRLAPIQVIMIPVGPPKFRDKVMARFDPLFDALKAAGVRVKADLREETPGWKFNEWEMRGVPLRIEIGPRDVDNKQCLMVRRDTGEKIPVPLDEAVERVQALLEEIQRNMFVKAKEFRDAHSHLHINTLAELKAHIARCEETGEIAGFVLAGWCGDAACEAKVKEETKFTSRNIPFHPPARKQVCLCCGKEAQHTVWFARAY</sequence>
<keyword id="KW-0030">Aminoacyl-tRNA synthetase</keyword>
<keyword id="KW-0067">ATP-binding</keyword>
<keyword id="KW-0963">Cytoplasm</keyword>
<keyword id="KW-0436">Ligase</keyword>
<keyword id="KW-0547">Nucleotide-binding</keyword>
<keyword id="KW-0648">Protein biosynthesis</keyword>
<keyword id="KW-1185">Reference proteome</keyword>
<feature type="chain" id="PRO_0000249152" description="Proline--tRNA ligase">
    <location>
        <begin position="1"/>
        <end position="488"/>
    </location>
</feature>
<gene>
    <name evidence="1" type="primary">proS</name>
    <name type="ordered locus">STH1502</name>
</gene>
<name>SYP_SYMTH</name>
<dbReference type="EC" id="6.1.1.15" evidence="1"/>
<dbReference type="EMBL" id="AP006840">
    <property type="protein sequence ID" value="BAD40487.1"/>
    <property type="molecule type" value="Genomic_DNA"/>
</dbReference>
<dbReference type="RefSeq" id="WP_011195632.1">
    <property type="nucleotide sequence ID" value="NC_006177.1"/>
</dbReference>
<dbReference type="SMR" id="Q67PA6"/>
<dbReference type="STRING" id="292459.STH1502"/>
<dbReference type="KEGG" id="sth:STH1502"/>
<dbReference type="eggNOG" id="COG0441">
    <property type="taxonomic scope" value="Bacteria"/>
</dbReference>
<dbReference type="HOGENOM" id="CLU_001882_4_2_9"/>
<dbReference type="OrthoDB" id="9809052at2"/>
<dbReference type="Proteomes" id="UP000000417">
    <property type="component" value="Chromosome"/>
</dbReference>
<dbReference type="GO" id="GO:0017101">
    <property type="term" value="C:aminoacyl-tRNA synthetase multienzyme complex"/>
    <property type="evidence" value="ECO:0007669"/>
    <property type="project" value="TreeGrafter"/>
</dbReference>
<dbReference type="GO" id="GO:0005737">
    <property type="term" value="C:cytoplasm"/>
    <property type="evidence" value="ECO:0007669"/>
    <property type="project" value="UniProtKB-SubCell"/>
</dbReference>
<dbReference type="GO" id="GO:0005524">
    <property type="term" value="F:ATP binding"/>
    <property type="evidence" value="ECO:0007669"/>
    <property type="project" value="UniProtKB-UniRule"/>
</dbReference>
<dbReference type="GO" id="GO:0140096">
    <property type="term" value="F:catalytic activity, acting on a protein"/>
    <property type="evidence" value="ECO:0007669"/>
    <property type="project" value="UniProtKB-ARBA"/>
</dbReference>
<dbReference type="GO" id="GO:0004827">
    <property type="term" value="F:proline-tRNA ligase activity"/>
    <property type="evidence" value="ECO:0007669"/>
    <property type="project" value="UniProtKB-UniRule"/>
</dbReference>
<dbReference type="GO" id="GO:0016740">
    <property type="term" value="F:transferase activity"/>
    <property type="evidence" value="ECO:0007669"/>
    <property type="project" value="UniProtKB-ARBA"/>
</dbReference>
<dbReference type="GO" id="GO:0006433">
    <property type="term" value="P:prolyl-tRNA aminoacylation"/>
    <property type="evidence" value="ECO:0007669"/>
    <property type="project" value="UniProtKB-UniRule"/>
</dbReference>
<dbReference type="CDD" id="cd00862">
    <property type="entry name" value="ProRS_anticodon_zinc"/>
    <property type="match status" value="1"/>
</dbReference>
<dbReference type="CDD" id="cd00778">
    <property type="entry name" value="ProRS_core_arch_euk"/>
    <property type="match status" value="1"/>
</dbReference>
<dbReference type="FunFam" id="3.40.50.800:FF:000005">
    <property type="entry name" value="bifunctional glutamate/proline--tRNA ligase"/>
    <property type="match status" value="1"/>
</dbReference>
<dbReference type="FunFam" id="3.30.930.10:FF:000023">
    <property type="entry name" value="Proline--tRNA ligase"/>
    <property type="match status" value="1"/>
</dbReference>
<dbReference type="Gene3D" id="3.40.50.800">
    <property type="entry name" value="Anticodon-binding domain"/>
    <property type="match status" value="1"/>
</dbReference>
<dbReference type="Gene3D" id="3.30.930.10">
    <property type="entry name" value="Bira Bifunctional Protein, Domain 2"/>
    <property type="match status" value="1"/>
</dbReference>
<dbReference type="Gene3D" id="3.30.110.30">
    <property type="entry name" value="C-terminal domain of ProRS"/>
    <property type="match status" value="1"/>
</dbReference>
<dbReference type="HAMAP" id="MF_01571">
    <property type="entry name" value="Pro_tRNA_synth_type3"/>
    <property type="match status" value="1"/>
</dbReference>
<dbReference type="InterPro" id="IPR002314">
    <property type="entry name" value="aa-tRNA-synt_IIb"/>
</dbReference>
<dbReference type="InterPro" id="IPR006195">
    <property type="entry name" value="aa-tRNA-synth_II"/>
</dbReference>
<dbReference type="InterPro" id="IPR045864">
    <property type="entry name" value="aa-tRNA-synth_II/BPL/LPL"/>
</dbReference>
<dbReference type="InterPro" id="IPR004154">
    <property type="entry name" value="Anticodon-bd"/>
</dbReference>
<dbReference type="InterPro" id="IPR036621">
    <property type="entry name" value="Anticodon-bd_dom_sf"/>
</dbReference>
<dbReference type="InterPro" id="IPR002316">
    <property type="entry name" value="Pro-tRNA-ligase_IIa"/>
</dbReference>
<dbReference type="InterPro" id="IPR004499">
    <property type="entry name" value="Pro-tRNA-ligase_IIa_arc-type"/>
</dbReference>
<dbReference type="InterPro" id="IPR016061">
    <property type="entry name" value="Pro-tRNA_ligase_II_C"/>
</dbReference>
<dbReference type="InterPro" id="IPR017449">
    <property type="entry name" value="Pro-tRNA_synth_II"/>
</dbReference>
<dbReference type="InterPro" id="IPR033721">
    <property type="entry name" value="ProRS_core_arch_euk"/>
</dbReference>
<dbReference type="NCBIfam" id="TIGR00408">
    <property type="entry name" value="proS_fam_I"/>
    <property type="match status" value="1"/>
</dbReference>
<dbReference type="PANTHER" id="PTHR43382:SF2">
    <property type="entry name" value="BIFUNCTIONAL GLUTAMATE_PROLINE--TRNA LIGASE"/>
    <property type="match status" value="1"/>
</dbReference>
<dbReference type="PANTHER" id="PTHR43382">
    <property type="entry name" value="PROLYL-TRNA SYNTHETASE"/>
    <property type="match status" value="1"/>
</dbReference>
<dbReference type="Pfam" id="PF03129">
    <property type="entry name" value="HGTP_anticodon"/>
    <property type="match status" value="1"/>
</dbReference>
<dbReference type="Pfam" id="PF09180">
    <property type="entry name" value="ProRS-C_1"/>
    <property type="match status" value="1"/>
</dbReference>
<dbReference type="Pfam" id="PF00587">
    <property type="entry name" value="tRNA-synt_2b"/>
    <property type="match status" value="1"/>
</dbReference>
<dbReference type="PRINTS" id="PR01046">
    <property type="entry name" value="TRNASYNTHPRO"/>
</dbReference>
<dbReference type="SMART" id="SM00946">
    <property type="entry name" value="ProRS-C_1"/>
    <property type="match status" value="1"/>
</dbReference>
<dbReference type="SUPFAM" id="SSF64586">
    <property type="entry name" value="C-terminal domain of ProRS"/>
    <property type="match status" value="1"/>
</dbReference>
<dbReference type="SUPFAM" id="SSF52954">
    <property type="entry name" value="Class II aaRS ABD-related"/>
    <property type="match status" value="1"/>
</dbReference>
<dbReference type="SUPFAM" id="SSF55681">
    <property type="entry name" value="Class II aaRS and biotin synthetases"/>
    <property type="match status" value="1"/>
</dbReference>
<dbReference type="PROSITE" id="PS50862">
    <property type="entry name" value="AA_TRNA_LIGASE_II"/>
    <property type="match status" value="1"/>
</dbReference>
<comment type="function">
    <text evidence="1">Catalyzes the attachment of proline to tRNA(Pro) in a two-step reaction: proline is first activated by ATP to form Pro-AMP and then transferred to the acceptor end of tRNA(Pro).</text>
</comment>
<comment type="catalytic activity">
    <reaction evidence="1">
        <text>tRNA(Pro) + L-proline + ATP = L-prolyl-tRNA(Pro) + AMP + diphosphate</text>
        <dbReference type="Rhea" id="RHEA:14305"/>
        <dbReference type="Rhea" id="RHEA-COMP:9700"/>
        <dbReference type="Rhea" id="RHEA-COMP:9702"/>
        <dbReference type="ChEBI" id="CHEBI:30616"/>
        <dbReference type="ChEBI" id="CHEBI:33019"/>
        <dbReference type="ChEBI" id="CHEBI:60039"/>
        <dbReference type="ChEBI" id="CHEBI:78442"/>
        <dbReference type="ChEBI" id="CHEBI:78532"/>
        <dbReference type="ChEBI" id="CHEBI:456215"/>
        <dbReference type="EC" id="6.1.1.15"/>
    </reaction>
</comment>
<comment type="subunit">
    <text evidence="1">Homodimer.</text>
</comment>
<comment type="subcellular location">
    <subcellularLocation>
        <location evidence="1">Cytoplasm</location>
    </subcellularLocation>
</comment>
<comment type="domain">
    <text evidence="1">Consists of three domains: the N-terminal catalytic domain, the anticodon-binding domain and the C-terminal extension.</text>
</comment>
<comment type="similarity">
    <text evidence="1">Belongs to the class-II aminoacyl-tRNA synthetase family. ProS type 3 subfamily.</text>
</comment>
<evidence type="ECO:0000255" key="1">
    <source>
        <dbReference type="HAMAP-Rule" id="MF_01571"/>
    </source>
</evidence>